<proteinExistence type="inferred from homology"/>
<name>Y2191_RHOPA</name>
<organism>
    <name type="scientific">Rhodopseudomonas palustris (strain ATCC BAA-98 / CGA009)</name>
    <dbReference type="NCBI Taxonomy" id="258594"/>
    <lineage>
        <taxon>Bacteria</taxon>
        <taxon>Pseudomonadati</taxon>
        <taxon>Pseudomonadota</taxon>
        <taxon>Alphaproteobacteria</taxon>
        <taxon>Hyphomicrobiales</taxon>
        <taxon>Nitrobacteraceae</taxon>
        <taxon>Rhodopseudomonas</taxon>
    </lineage>
</organism>
<feature type="chain" id="PRO_0000176000" description="UPF0178 protein RPA2191">
    <location>
        <begin position="1"/>
        <end position="158"/>
    </location>
</feature>
<evidence type="ECO:0000255" key="1">
    <source>
        <dbReference type="HAMAP-Rule" id="MF_00489"/>
    </source>
</evidence>
<reference key="1">
    <citation type="journal article" date="2004" name="Nat. Biotechnol.">
        <title>Complete genome sequence of the metabolically versatile photosynthetic bacterium Rhodopseudomonas palustris.</title>
        <authorList>
            <person name="Larimer F.W."/>
            <person name="Chain P."/>
            <person name="Hauser L."/>
            <person name="Lamerdin J.E."/>
            <person name="Malfatti S."/>
            <person name="Do L."/>
            <person name="Land M.L."/>
            <person name="Pelletier D.A."/>
            <person name="Beatty J.T."/>
            <person name="Lang A.S."/>
            <person name="Tabita F.R."/>
            <person name="Gibson J.L."/>
            <person name="Hanson T.E."/>
            <person name="Bobst C."/>
            <person name="Torres y Torres J.L."/>
            <person name="Peres C."/>
            <person name="Harrison F.H."/>
            <person name="Gibson J."/>
            <person name="Harwood C.S."/>
        </authorList>
    </citation>
    <scope>NUCLEOTIDE SEQUENCE [LARGE SCALE GENOMIC DNA]</scope>
    <source>
        <strain>ATCC BAA-98 / CGA009</strain>
    </source>
</reference>
<comment type="similarity">
    <text evidence="1">Belongs to the UPF0178 family.</text>
</comment>
<dbReference type="EMBL" id="BX572600">
    <property type="protein sequence ID" value="CAE27632.1"/>
    <property type="molecule type" value="Genomic_DNA"/>
</dbReference>
<dbReference type="RefSeq" id="WP_011157746.1">
    <property type="nucleotide sequence ID" value="NZ_CP116810.1"/>
</dbReference>
<dbReference type="SMR" id="Q6N7R5"/>
<dbReference type="STRING" id="258594.RPA2191"/>
<dbReference type="GeneID" id="66893242"/>
<dbReference type="eggNOG" id="COG1671">
    <property type="taxonomic scope" value="Bacteria"/>
</dbReference>
<dbReference type="HOGENOM" id="CLU_106619_2_1_5"/>
<dbReference type="PhylomeDB" id="Q6N7R5"/>
<dbReference type="CDD" id="cd18720">
    <property type="entry name" value="PIN_YqxD-like"/>
    <property type="match status" value="1"/>
</dbReference>
<dbReference type="HAMAP" id="MF_00489">
    <property type="entry name" value="UPF0178"/>
    <property type="match status" value="1"/>
</dbReference>
<dbReference type="InterPro" id="IPR003791">
    <property type="entry name" value="UPF0178"/>
</dbReference>
<dbReference type="NCBIfam" id="NF001095">
    <property type="entry name" value="PRK00124.1"/>
    <property type="match status" value="1"/>
</dbReference>
<dbReference type="PANTHER" id="PTHR35146">
    <property type="entry name" value="UPF0178 PROTEIN YAII"/>
    <property type="match status" value="1"/>
</dbReference>
<dbReference type="PANTHER" id="PTHR35146:SF1">
    <property type="entry name" value="UPF0178 PROTEIN YAII"/>
    <property type="match status" value="1"/>
</dbReference>
<dbReference type="Pfam" id="PF02639">
    <property type="entry name" value="DUF188"/>
    <property type="match status" value="1"/>
</dbReference>
<accession>Q6N7R5</accession>
<gene>
    <name type="ordered locus">RPA2191</name>
</gene>
<protein>
    <recommendedName>
        <fullName evidence="1">UPF0178 protein RPA2191</fullName>
    </recommendedName>
</protein>
<sequence length="158" mass="16962">MTDALTRIYVDADACPVKDEVYKVAERHHLPVTLVAGGFIRVPQHPLIERVAAGSGMDAADDWIAERIKPGDIVVTADIPLASRCVKAGATAIAPNGKPFTEESIGMTLAVRNLMTDLRSTGEITGGPRAFSPRDRSTFLSALDSAIRRIARRRAAPT</sequence>